<gene>
    <name evidence="1" type="primary">rpoC</name>
    <name type="ordered locus">FP1175</name>
</gene>
<dbReference type="EC" id="2.7.7.6" evidence="1"/>
<dbReference type="EMBL" id="AM398681">
    <property type="protein sequence ID" value="CAL43262.1"/>
    <property type="molecule type" value="Genomic_DNA"/>
</dbReference>
<dbReference type="RefSeq" id="WP_011963311.1">
    <property type="nucleotide sequence ID" value="NC_009613.3"/>
</dbReference>
<dbReference type="RefSeq" id="YP_001296073.1">
    <property type="nucleotide sequence ID" value="NC_009613.3"/>
</dbReference>
<dbReference type="SMR" id="A6GYT9"/>
<dbReference type="STRING" id="402612.FP1175"/>
<dbReference type="EnsemblBacteria" id="CAL43262">
    <property type="protein sequence ID" value="CAL43262"/>
    <property type="gene ID" value="FP1175"/>
</dbReference>
<dbReference type="GeneID" id="66553079"/>
<dbReference type="KEGG" id="fps:FP1175"/>
<dbReference type="PATRIC" id="fig|402612.5.peg.1192"/>
<dbReference type="eggNOG" id="COG0086">
    <property type="taxonomic scope" value="Bacteria"/>
</dbReference>
<dbReference type="HOGENOM" id="CLU_000524_3_1_10"/>
<dbReference type="OrthoDB" id="9815296at2"/>
<dbReference type="Proteomes" id="UP000006394">
    <property type="component" value="Chromosome"/>
</dbReference>
<dbReference type="GO" id="GO:0000428">
    <property type="term" value="C:DNA-directed RNA polymerase complex"/>
    <property type="evidence" value="ECO:0007669"/>
    <property type="project" value="UniProtKB-KW"/>
</dbReference>
<dbReference type="GO" id="GO:0003677">
    <property type="term" value="F:DNA binding"/>
    <property type="evidence" value="ECO:0007669"/>
    <property type="project" value="UniProtKB-UniRule"/>
</dbReference>
<dbReference type="GO" id="GO:0003899">
    <property type="term" value="F:DNA-directed RNA polymerase activity"/>
    <property type="evidence" value="ECO:0007669"/>
    <property type="project" value="UniProtKB-UniRule"/>
</dbReference>
<dbReference type="GO" id="GO:0000287">
    <property type="term" value="F:magnesium ion binding"/>
    <property type="evidence" value="ECO:0007669"/>
    <property type="project" value="UniProtKB-UniRule"/>
</dbReference>
<dbReference type="GO" id="GO:0008270">
    <property type="term" value="F:zinc ion binding"/>
    <property type="evidence" value="ECO:0007669"/>
    <property type="project" value="UniProtKB-UniRule"/>
</dbReference>
<dbReference type="GO" id="GO:0006351">
    <property type="term" value="P:DNA-templated transcription"/>
    <property type="evidence" value="ECO:0007669"/>
    <property type="project" value="UniProtKB-UniRule"/>
</dbReference>
<dbReference type="CDD" id="cd02655">
    <property type="entry name" value="RNAP_beta'_C"/>
    <property type="match status" value="1"/>
</dbReference>
<dbReference type="CDD" id="cd01609">
    <property type="entry name" value="RNAP_beta'_N"/>
    <property type="match status" value="1"/>
</dbReference>
<dbReference type="Gene3D" id="1.10.132.30">
    <property type="match status" value="1"/>
</dbReference>
<dbReference type="Gene3D" id="1.10.150.390">
    <property type="match status" value="1"/>
</dbReference>
<dbReference type="Gene3D" id="1.10.1790.20">
    <property type="match status" value="1"/>
</dbReference>
<dbReference type="Gene3D" id="1.10.40.90">
    <property type="match status" value="1"/>
</dbReference>
<dbReference type="Gene3D" id="2.40.40.20">
    <property type="match status" value="1"/>
</dbReference>
<dbReference type="Gene3D" id="2.40.50.100">
    <property type="match status" value="3"/>
</dbReference>
<dbReference type="Gene3D" id="4.10.860.120">
    <property type="entry name" value="RNA polymerase II, clamp domain"/>
    <property type="match status" value="1"/>
</dbReference>
<dbReference type="Gene3D" id="1.10.274.100">
    <property type="entry name" value="RNA polymerase Rpb1, domain 3"/>
    <property type="match status" value="2"/>
</dbReference>
<dbReference type="HAMAP" id="MF_01322">
    <property type="entry name" value="RNApol_bact_RpoC"/>
    <property type="match status" value="1"/>
</dbReference>
<dbReference type="InterPro" id="IPR045867">
    <property type="entry name" value="DNA-dir_RpoC_beta_prime"/>
</dbReference>
<dbReference type="InterPro" id="IPR012754">
    <property type="entry name" value="DNA-dir_RpoC_beta_prime_bact"/>
</dbReference>
<dbReference type="InterPro" id="IPR000722">
    <property type="entry name" value="RNA_pol_asu"/>
</dbReference>
<dbReference type="InterPro" id="IPR006592">
    <property type="entry name" value="RNA_pol_N"/>
</dbReference>
<dbReference type="InterPro" id="IPR007080">
    <property type="entry name" value="RNA_pol_Rpb1_1"/>
</dbReference>
<dbReference type="InterPro" id="IPR007066">
    <property type="entry name" value="RNA_pol_Rpb1_3"/>
</dbReference>
<dbReference type="InterPro" id="IPR042102">
    <property type="entry name" value="RNA_pol_Rpb1_3_sf"/>
</dbReference>
<dbReference type="InterPro" id="IPR007083">
    <property type="entry name" value="RNA_pol_Rpb1_4"/>
</dbReference>
<dbReference type="InterPro" id="IPR007081">
    <property type="entry name" value="RNA_pol_Rpb1_5"/>
</dbReference>
<dbReference type="InterPro" id="IPR044893">
    <property type="entry name" value="RNA_pol_Rpb1_clamp_domain"/>
</dbReference>
<dbReference type="InterPro" id="IPR038120">
    <property type="entry name" value="Rpb1_funnel_sf"/>
</dbReference>
<dbReference type="NCBIfam" id="TIGR02386">
    <property type="entry name" value="rpoC_TIGR"/>
    <property type="match status" value="1"/>
</dbReference>
<dbReference type="PANTHER" id="PTHR19376">
    <property type="entry name" value="DNA-DIRECTED RNA POLYMERASE"/>
    <property type="match status" value="1"/>
</dbReference>
<dbReference type="PANTHER" id="PTHR19376:SF54">
    <property type="entry name" value="DNA-DIRECTED RNA POLYMERASE SUBUNIT BETA"/>
    <property type="match status" value="1"/>
</dbReference>
<dbReference type="Pfam" id="PF04997">
    <property type="entry name" value="RNA_pol_Rpb1_1"/>
    <property type="match status" value="1"/>
</dbReference>
<dbReference type="Pfam" id="PF00623">
    <property type="entry name" value="RNA_pol_Rpb1_2"/>
    <property type="match status" value="2"/>
</dbReference>
<dbReference type="Pfam" id="PF04983">
    <property type="entry name" value="RNA_pol_Rpb1_3"/>
    <property type="match status" value="1"/>
</dbReference>
<dbReference type="Pfam" id="PF05000">
    <property type="entry name" value="RNA_pol_Rpb1_4"/>
    <property type="match status" value="1"/>
</dbReference>
<dbReference type="Pfam" id="PF04998">
    <property type="entry name" value="RNA_pol_Rpb1_5"/>
    <property type="match status" value="1"/>
</dbReference>
<dbReference type="SMART" id="SM00663">
    <property type="entry name" value="RPOLA_N"/>
    <property type="match status" value="1"/>
</dbReference>
<dbReference type="SUPFAM" id="SSF64484">
    <property type="entry name" value="beta and beta-prime subunits of DNA dependent RNA-polymerase"/>
    <property type="match status" value="1"/>
</dbReference>
<name>RPOC_FLAPJ</name>
<reference key="1">
    <citation type="journal article" date="2007" name="Nat. Biotechnol.">
        <title>Complete genome sequence of the fish pathogen Flavobacterium psychrophilum.</title>
        <authorList>
            <person name="Duchaud E."/>
            <person name="Boussaha M."/>
            <person name="Loux V."/>
            <person name="Bernardet J.-F."/>
            <person name="Michel C."/>
            <person name="Kerouault B."/>
            <person name="Mondot S."/>
            <person name="Nicolas P."/>
            <person name="Bossy R."/>
            <person name="Caron C."/>
            <person name="Bessieres P."/>
            <person name="Gibrat J.-F."/>
            <person name="Claverol S."/>
            <person name="Dumetz F."/>
            <person name="Le Henaff M."/>
            <person name="Benmansour A."/>
        </authorList>
    </citation>
    <scope>NUCLEOTIDE SEQUENCE [LARGE SCALE GENOMIC DNA]</scope>
    <source>
        <strain>ATCC 49511 / DSM 21280 / CIP 103535 / JIP02/86</strain>
    </source>
</reference>
<feature type="chain" id="PRO_0000308834" description="DNA-directed RNA polymerase subunit beta'">
    <location>
        <begin position="1"/>
        <end position="1438"/>
    </location>
</feature>
<feature type="binding site" evidence="1">
    <location>
        <position position="72"/>
    </location>
    <ligand>
        <name>Zn(2+)</name>
        <dbReference type="ChEBI" id="CHEBI:29105"/>
        <label>1</label>
    </ligand>
</feature>
<feature type="binding site" evidence="1">
    <location>
        <position position="74"/>
    </location>
    <ligand>
        <name>Zn(2+)</name>
        <dbReference type="ChEBI" id="CHEBI:29105"/>
        <label>1</label>
    </ligand>
</feature>
<feature type="binding site" evidence="1">
    <location>
        <position position="87"/>
    </location>
    <ligand>
        <name>Zn(2+)</name>
        <dbReference type="ChEBI" id="CHEBI:29105"/>
        <label>1</label>
    </ligand>
</feature>
<feature type="binding site" evidence="1">
    <location>
        <position position="90"/>
    </location>
    <ligand>
        <name>Zn(2+)</name>
        <dbReference type="ChEBI" id="CHEBI:29105"/>
        <label>1</label>
    </ligand>
</feature>
<feature type="binding site" evidence="1">
    <location>
        <position position="483"/>
    </location>
    <ligand>
        <name>Mg(2+)</name>
        <dbReference type="ChEBI" id="CHEBI:18420"/>
    </ligand>
</feature>
<feature type="binding site" evidence="1">
    <location>
        <position position="485"/>
    </location>
    <ligand>
        <name>Mg(2+)</name>
        <dbReference type="ChEBI" id="CHEBI:18420"/>
    </ligand>
</feature>
<feature type="binding site" evidence="1">
    <location>
        <position position="487"/>
    </location>
    <ligand>
        <name>Mg(2+)</name>
        <dbReference type="ChEBI" id="CHEBI:18420"/>
    </ligand>
</feature>
<feature type="binding site" evidence="1">
    <location>
        <position position="831"/>
    </location>
    <ligand>
        <name>Zn(2+)</name>
        <dbReference type="ChEBI" id="CHEBI:29105"/>
        <label>2</label>
    </ligand>
</feature>
<feature type="binding site" evidence="1">
    <location>
        <position position="905"/>
    </location>
    <ligand>
        <name>Zn(2+)</name>
        <dbReference type="ChEBI" id="CHEBI:29105"/>
        <label>2</label>
    </ligand>
</feature>
<feature type="binding site" evidence="1">
    <location>
        <position position="912"/>
    </location>
    <ligand>
        <name>Zn(2+)</name>
        <dbReference type="ChEBI" id="CHEBI:29105"/>
        <label>2</label>
    </ligand>
</feature>
<feature type="binding site" evidence="1">
    <location>
        <position position="915"/>
    </location>
    <ligand>
        <name>Zn(2+)</name>
        <dbReference type="ChEBI" id="CHEBI:29105"/>
        <label>2</label>
    </ligand>
</feature>
<proteinExistence type="inferred from homology"/>
<comment type="function">
    <text evidence="1">DNA-dependent RNA polymerase catalyzes the transcription of DNA into RNA using the four ribonucleoside triphosphates as substrates.</text>
</comment>
<comment type="catalytic activity">
    <reaction evidence="1">
        <text>RNA(n) + a ribonucleoside 5'-triphosphate = RNA(n+1) + diphosphate</text>
        <dbReference type="Rhea" id="RHEA:21248"/>
        <dbReference type="Rhea" id="RHEA-COMP:14527"/>
        <dbReference type="Rhea" id="RHEA-COMP:17342"/>
        <dbReference type="ChEBI" id="CHEBI:33019"/>
        <dbReference type="ChEBI" id="CHEBI:61557"/>
        <dbReference type="ChEBI" id="CHEBI:140395"/>
        <dbReference type="EC" id="2.7.7.6"/>
    </reaction>
</comment>
<comment type="cofactor">
    <cofactor evidence="1">
        <name>Mg(2+)</name>
        <dbReference type="ChEBI" id="CHEBI:18420"/>
    </cofactor>
    <text evidence="1">Binds 1 Mg(2+) ion per subunit.</text>
</comment>
<comment type="cofactor">
    <cofactor evidence="1">
        <name>Zn(2+)</name>
        <dbReference type="ChEBI" id="CHEBI:29105"/>
    </cofactor>
    <text evidence="1">Binds 2 Zn(2+) ions per subunit.</text>
</comment>
<comment type="subunit">
    <text evidence="1">The RNAP catalytic core consists of 2 alpha, 1 beta, 1 beta' and 1 omega subunit. When a sigma factor is associated with the core the holoenzyme is formed, which can initiate transcription.</text>
</comment>
<comment type="similarity">
    <text evidence="1">Belongs to the RNA polymerase beta' chain family.</text>
</comment>
<sequence length="1438" mass="160606">MMENRNNNNNRDKNPVKRFNKISIGLASPESILAESRGEVLKPETINYRTHKPERDGLFCERIFGPVKDFECACGKYKRIRYKGIVCDRCGVEVTEKKVRRDRVGHINLVVPIAHIWYFRSLPNKIGYILGLPSKKLDMIIYYERYVVIQAGIAQNAEGESIKRLDFLTEEEYLNILDTLPADNQYLDDFDPNKFVAKMGAECIMDLLARINLDELSYDLRHKANNETSKQRKTEALKRLQVVESFRESNKNRENRPEWMIMKVVPVIPPELRPLVPLDGGRFATSDLNDLYRRVIIRNNRLKRLMEIKAPEVILRNEKRMLQESVDSLFDNTRKASAVKTESNRPLKSLSDSLKGKQGRFRQNLLGKRVDYSARSVIVVGPELRLFECGIPKDMAAELYKPFVIRKLIERGIVKTVKSAKKIIDKKEPVVWDILENVIKGHPILLNRAPTLHRLGIQAFQPKLIEGKAIQLHPLVCTAFNADFDGDQMAVHLPLGPEAILEAQLLMLASHNILNPANGAPVTVPSQDMVLGLYYMTKERLTTEGHIILGQDLVFYSAEETNIALNEGRVELNARVKIRAKDFNEEGELVYKIIQTTAGRVLFNEVVPEAAGYINDVLTKKNLRDIIGKILAVTDVPTTAAFLDNIKDMGYKFAFKGGLSFSLGDIRIPEQKTQLIADARAQVEGISGNYNMGLITNNERYNQVIDIWTSANAQLTELAMKNIREDQQGFNSVYMMLDSGARGSKEQIRQLTGMRGLMAKPKKSTAGGGEIIENPILSNFKEGLSILEYFISTHGARKGLADTALKTADAGYLTRRLHDVSQDVIVNIEDCGTLRGVEVSALKKNEEIVESLGERILGRVVLQDVVNPLTNDILVHAGEQITEAIMKVIENSPVEKVEVRSPLVCEATKGICAKCYGRNLATGKMTQRGEAVGVIAAQSIGEPGTQLTLRTFHVGGVAGGISEESNILAKFAGRLEIEDLKTVKGEDGEGNLVDIVISRSTEMKLIDQKTGILLATNNIPYGSSIYVNDAQVVEKGDVICKWDPYNGVIVSEFTGKIAYEDLEQGQSFMVEIDEQTGFQEKVISEGRNKKLIPTLLVYGKNDELIRSYNLPVGAHLMVNDGEKIKAGKILVKIPRRSSKTGDITGGLPRITELLEARNPSNPAVVSEIDGVVSFGKIKRGNREIVIESKFGEIKKYLVKLSSQILVQENDFVRAGVPLSDGAITPDDILRIQGPAAVQQYLVNEIQEVYRLQGVKINDKHFEVVIRQMMRKVRVQDPGDTLFLEDQLIHTKDFIVENDKLYGMKVVEDSGDSSNLKAGQIITPRELRDENSLLKRTDKNLVIARDVITATATPVLQGITRASLQTKSFISAASFQETTKVLNEAAVAGKIDYLEGLKENVIVGHRIPAGTGMREYDHTIVGSKEEYNDLMVAKEEFNY</sequence>
<keyword id="KW-0240">DNA-directed RNA polymerase</keyword>
<keyword id="KW-0460">Magnesium</keyword>
<keyword id="KW-0479">Metal-binding</keyword>
<keyword id="KW-0548">Nucleotidyltransferase</keyword>
<keyword id="KW-1185">Reference proteome</keyword>
<keyword id="KW-0804">Transcription</keyword>
<keyword id="KW-0808">Transferase</keyword>
<keyword id="KW-0862">Zinc</keyword>
<protein>
    <recommendedName>
        <fullName evidence="1">DNA-directed RNA polymerase subunit beta'</fullName>
        <shortName evidence="1">RNAP subunit beta'</shortName>
        <ecNumber evidence="1">2.7.7.6</ecNumber>
    </recommendedName>
    <alternativeName>
        <fullName evidence="1">RNA polymerase subunit beta'</fullName>
    </alternativeName>
    <alternativeName>
        <fullName evidence="1">Transcriptase subunit beta'</fullName>
    </alternativeName>
</protein>
<accession>A6GYT9</accession>
<evidence type="ECO:0000255" key="1">
    <source>
        <dbReference type="HAMAP-Rule" id="MF_01322"/>
    </source>
</evidence>
<organism>
    <name type="scientific">Flavobacterium psychrophilum (strain ATCC 49511 / DSM 21280 / CIP 103535 / JIP02/86)</name>
    <dbReference type="NCBI Taxonomy" id="402612"/>
    <lineage>
        <taxon>Bacteria</taxon>
        <taxon>Pseudomonadati</taxon>
        <taxon>Bacteroidota</taxon>
        <taxon>Flavobacteriia</taxon>
        <taxon>Flavobacteriales</taxon>
        <taxon>Flavobacteriaceae</taxon>
        <taxon>Flavobacterium</taxon>
    </lineage>
</organism>